<name>RNFG_SHELP</name>
<gene>
    <name evidence="1" type="primary">rnfG</name>
    <name type="ordered locus">Shew_2070</name>
</gene>
<keyword id="KW-0997">Cell inner membrane</keyword>
<keyword id="KW-1003">Cell membrane</keyword>
<keyword id="KW-0249">Electron transport</keyword>
<keyword id="KW-0285">Flavoprotein</keyword>
<keyword id="KW-0288">FMN</keyword>
<keyword id="KW-0472">Membrane</keyword>
<keyword id="KW-0597">Phosphoprotein</keyword>
<keyword id="KW-1185">Reference proteome</keyword>
<keyword id="KW-1278">Translocase</keyword>
<keyword id="KW-0812">Transmembrane</keyword>
<keyword id="KW-1133">Transmembrane helix</keyword>
<keyword id="KW-0813">Transport</keyword>
<comment type="function">
    <text evidence="1">Part of a membrane-bound complex that couples electron transfer with translocation of ions across the membrane.</text>
</comment>
<comment type="cofactor">
    <cofactor evidence="1">
        <name>FMN</name>
        <dbReference type="ChEBI" id="CHEBI:58210"/>
    </cofactor>
</comment>
<comment type="subunit">
    <text evidence="1">The complex is composed of six subunits: RnfA, RnfB, RnfC, RnfD, RnfE and RnfG.</text>
</comment>
<comment type="subcellular location">
    <subcellularLocation>
        <location evidence="1">Cell inner membrane</location>
        <topology evidence="1">Single-pass membrane protein</topology>
    </subcellularLocation>
</comment>
<comment type="similarity">
    <text evidence="1">Belongs to the RnfG family.</text>
</comment>
<evidence type="ECO:0000255" key="1">
    <source>
        <dbReference type="HAMAP-Rule" id="MF_00479"/>
    </source>
</evidence>
<accession>A3QEN8</accession>
<sequence length="212" mass="23404">MKRSIVKNASLLGLFALLCTALVALVNQFTFERIKQQQDLELMRTLHQIIPDEMHDNALIEHCILIQDADVLGIDEPLPAYIASQGGEPVAIAMETVAPDGYNGQIKLIVAIDAKGEVLGVRTLNHNETPGLGDKIDLRKSSWVLGFKGQSIQGEQDKRWAVKKDGGQFDQFTGATITPRAYVGAVKRTLAYFNANQQTLLNRPANCEVQYE</sequence>
<reference key="1">
    <citation type="submission" date="2007-03" db="EMBL/GenBank/DDBJ databases">
        <title>Complete sequence of Shewanella loihica PV-4.</title>
        <authorList>
            <consortium name="US DOE Joint Genome Institute"/>
            <person name="Copeland A."/>
            <person name="Lucas S."/>
            <person name="Lapidus A."/>
            <person name="Barry K."/>
            <person name="Detter J.C."/>
            <person name="Glavina del Rio T."/>
            <person name="Hammon N."/>
            <person name="Israni S."/>
            <person name="Dalin E."/>
            <person name="Tice H."/>
            <person name="Pitluck S."/>
            <person name="Chain P."/>
            <person name="Malfatti S."/>
            <person name="Shin M."/>
            <person name="Vergez L."/>
            <person name="Schmutz J."/>
            <person name="Larimer F."/>
            <person name="Land M."/>
            <person name="Hauser L."/>
            <person name="Kyrpides N."/>
            <person name="Mikhailova N."/>
            <person name="Romine M.F."/>
            <person name="Serres G."/>
            <person name="Fredrickson J."/>
            <person name="Tiedje J."/>
            <person name="Richardson P."/>
        </authorList>
    </citation>
    <scope>NUCLEOTIDE SEQUENCE [LARGE SCALE GENOMIC DNA]</scope>
    <source>
        <strain>ATCC BAA-1088 / PV-4</strain>
    </source>
</reference>
<organism>
    <name type="scientific">Shewanella loihica (strain ATCC BAA-1088 / PV-4)</name>
    <dbReference type="NCBI Taxonomy" id="323850"/>
    <lineage>
        <taxon>Bacteria</taxon>
        <taxon>Pseudomonadati</taxon>
        <taxon>Pseudomonadota</taxon>
        <taxon>Gammaproteobacteria</taxon>
        <taxon>Alteromonadales</taxon>
        <taxon>Shewanellaceae</taxon>
        <taxon>Shewanella</taxon>
    </lineage>
</organism>
<feature type="chain" id="PRO_1000014128" description="Ion-translocating oxidoreductase complex subunit G">
    <location>
        <begin position="1"/>
        <end position="212"/>
    </location>
</feature>
<feature type="transmembrane region" description="Helical" evidence="1">
    <location>
        <begin position="9"/>
        <end position="29"/>
    </location>
</feature>
<feature type="modified residue" description="FMN phosphoryl threonine" evidence="1">
    <location>
        <position position="176"/>
    </location>
</feature>
<protein>
    <recommendedName>
        <fullName evidence="1">Ion-translocating oxidoreductase complex subunit G</fullName>
        <ecNumber evidence="1">7.-.-.-</ecNumber>
    </recommendedName>
    <alternativeName>
        <fullName evidence="1">Rnf electron transport complex subunit G</fullName>
    </alternativeName>
</protein>
<proteinExistence type="inferred from homology"/>
<dbReference type="EC" id="7.-.-.-" evidence="1"/>
<dbReference type="EMBL" id="CP000606">
    <property type="protein sequence ID" value="ABO23936.1"/>
    <property type="molecule type" value="Genomic_DNA"/>
</dbReference>
<dbReference type="RefSeq" id="WP_011865868.1">
    <property type="nucleotide sequence ID" value="NC_009092.1"/>
</dbReference>
<dbReference type="SMR" id="A3QEN8"/>
<dbReference type="STRING" id="323850.Shew_2070"/>
<dbReference type="DNASU" id="4923434"/>
<dbReference type="KEGG" id="slo:Shew_2070"/>
<dbReference type="eggNOG" id="COG4659">
    <property type="taxonomic scope" value="Bacteria"/>
</dbReference>
<dbReference type="HOGENOM" id="CLU_077882_1_0_6"/>
<dbReference type="OrthoDB" id="9784165at2"/>
<dbReference type="Proteomes" id="UP000001558">
    <property type="component" value="Chromosome"/>
</dbReference>
<dbReference type="GO" id="GO:0005886">
    <property type="term" value="C:plasma membrane"/>
    <property type="evidence" value="ECO:0007669"/>
    <property type="project" value="UniProtKB-SubCell"/>
</dbReference>
<dbReference type="GO" id="GO:0009055">
    <property type="term" value="F:electron transfer activity"/>
    <property type="evidence" value="ECO:0007669"/>
    <property type="project" value="InterPro"/>
</dbReference>
<dbReference type="GO" id="GO:0010181">
    <property type="term" value="F:FMN binding"/>
    <property type="evidence" value="ECO:0007669"/>
    <property type="project" value="InterPro"/>
</dbReference>
<dbReference type="GO" id="GO:0022900">
    <property type="term" value="P:electron transport chain"/>
    <property type="evidence" value="ECO:0007669"/>
    <property type="project" value="UniProtKB-UniRule"/>
</dbReference>
<dbReference type="HAMAP" id="MF_00479">
    <property type="entry name" value="RsxG_RnfG"/>
    <property type="match status" value="1"/>
</dbReference>
<dbReference type="InterPro" id="IPR007329">
    <property type="entry name" value="FMN-bd"/>
</dbReference>
<dbReference type="InterPro" id="IPR010209">
    <property type="entry name" value="Ion_transpt_RnfG/RsxG"/>
</dbReference>
<dbReference type="NCBIfam" id="NF002519">
    <property type="entry name" value="PRK01908.1"/>
    <property type="match status" value="1"/>
</dbReference>
<dbReference type="NCBIfam" id="TIGR01947">
    <property type="entry name" value="rnfG"/>
    <property type="match status" value="1"/>
</dbReference>
<dbReference type="PANTHER" id="PTHR36118">
    <property type="entry name" value="ION-TRANSLOCATING OXIDOREDUCTASE COMPLEX SUBUNIT G"/>
    <property type="match status" value="1"/>
</dbReference>
<dbReference type="PANTHER" id="PTHR36118:SF1">
    <property type="entry name" value="ION-TRANSLOCATING OXIDOREDUCTASE COMPLEX SUBUNIT G"/>
    <property type="match status" value="1"/>
</dbReference>
<dbReference type="Pfam" id="PF04205">
    <property type="entry name" value="FMN_bind"/>
    <property type="match status" value="1"/>
</dbReference>
<dbReference type="PIRSF" id="PIRSF006091">
    <property type="entry name" value="E_trnsport_RnfG"/>
    <property type="match status" value="1"/>
</dbReference>
<dbReference type="SMART" id="SM00900">
    <property type="entry name" value="FMN_bind"/>
    <property type="match status" value="1"/>
</dbReference>